<keyword id="KW-0067">ATP-binding</keyword>
<keyword id="KW-0963">Cytoplasm</keyword>
<keyword id="KW-0235">DNA replication</keyword>
<keyword id="KW-0238">DNA-binding</keyword>
<keyword id="KW-0446">Lipid-binding</keyword>
<keyword id="KW-0547">Nucleotide-binding</keyword>
<keyword id="KW-1185">Reference proteome</keyword>
<comment type="function">
    <text evidence="1">Plays an essential role in the initiation and regulation of chromosomal replication. ATP-DnaA binds to the origin of replication (oriC) to initiate formation of the DNA replication initiation complex once per cell cycle. Binds the DnaA box (a 9 base pair repeat at the origin) and separates the double-stranded (ds)DNA. Forms a right-handed helical filament on oriC DNA; dsDNA binds to the exterior of the filament while single-stranded (ss)DNA is stabiized in the filament's interior. The ATP-DnaA-oriC complex binds and stabilizes one strand of the AT-rich DNA unwinding element (DUE), permitting loading of DNA polymerase. After initiation quickly degrades to an ADP-DnaA complex that is not apt for DNA replication. Binds acidic phospholipids.</text>
</comment>
<comment type="subunit">
    <text evidence="1">Oligomerizes as a right-handed, spiral filament on DNA at oriC.</text>
</comment>
<comment type="subcellular location">
    <subcellularLocation>
        <location evidence="1">Cytoplasm</location>
    </subcellularLocation>
</comment>
<comment type="domain">
    <text evidence="1">Domain I is involved in oligomerization and binding regulators, domain II is flexibile and of varying length in different bacteria, domain III forms the AAA+ region, while domain IV binds dsDNA.</text>
</comment>
<comment type="similarity">
    <text evidence="1">Belongs to the DnaA family.</text>
</comment>
<evidence type="ECO:0000255" key="1">
    <source>
        <dbReference type="HAMAP-Rule" id="MF_00377"/>
    </source>
</evidence>
<evidence type="ECO:0000256" key="2">
    <source>
        <dbReference type="SAM" id="MobiDB-lite"/>
    </source>
</evidence>
<dbReference type="EMBL" id="CP000851">
    <property type="protein sequence ID" value="ABV85330.1"/>
    <property type="molecule type" value="Genomic_DNA"/>
</dbReference>
<dbReference type="RefSeq" id="WP_012153278.1">
    <property type="nucleotide sequence ID" value="NC_009901.1"/>
</dbReference>
<dbReference type="SMR" id="A8GYE3"/>
<dbReference type="STRING" id="398579.Spea_0001"/>
<dbReference type="KEGG" id="spl:Spea_0001"/>
<dbReference type="eggNOG" id="COG0593">
    <property type="taxonomic scope" value="Bacteria"/>
</dbReference>
<dbReference type="HOGENOM" id="CLU_026910_0_1_6"/>
<dbReference type="OrthoDB" id="9807019at2"/>
<dbReference type="Proteomes" id="UP000002608">
    <property type="component" value="Chromosome"/>
</dbReference>
<dbReference type="GO" id="GO:0005737">
    <property type="term" value="C:cytoplasm"/>
    <property type="evidence" value="ECO:0007669"/>
    <property type="project" value="UniProtKB-SubCell"/>
</dbReference>
<dbReference type="GO" id="GO:0005886">
    <property type="term" value="C:plasma membrane"/>
    <property type="evidence" value="ECO:0007669"/>
    <property type="project" value="TreeGrafter"/>
</dbReference>
<dbReference type="GO" id="GO:0005524">
    <property type="term" value="F:ATP binding"/>
    <property type="evidence" value="ECO:0007669"/>
    <property type="project" value="UniProtKB-UniRule"/>
</dbReference>
<dbReference type="GO" id="GO:0016887">
    <property type="term" value="F:ATP hydrolysis activity"/>
    <property type="evidence" value="ECO:0007669"/>
    <property type="project" value="InterPro"/>
</dbReference>
<dbReference type="GO" id="GO:0003688">
    <property type="term" value="F:DNA replication origin binding"/>
    <property type="evidence" value="ECO:0007669"/>
    <property type="project" value="UniProtKB-UniRule"/>
</dbReference>
<dbReference type="GO" id="GO:0008289">
    <property type="term" value="F:lipid binding"/>
    <property type="evidence" value="ECO:0007669"/>
    <property type="project" value="UniProtKB-KW"/>
</dbReference>
<dbReference type="GO" id="GO:0006270">
    <property type="term" value="P:DNA replication initiation"/>
    <property type="evidence" value="ECO:0007669"/>
    <property type="project" value="UniProtKB-UniRule"/>
</dbReference>
<dbReference type="GO" id="GO:0006275">
    <property type="term" value="P:regulation of DNA replication"/>
    <property type="evidence" value="ECO:0007669"/>
    <property type="project" value="UniProtKB-UniRule"/>
</dbReference>
<dbReference type="CDD" id="cd00009">
    <property type="entry name" value="AAA"/>
    <property type="match status" value="1"/>
</dbReference>
<dbReference type="CDD" id="cd06571">
    <property type="entry name" value="Bac_DnaA_C"/>
    <property type="match status" value="1"/>
</dbReference>
<dbReference type="FunFam" id="1.10.1750.10:FF:000001">
    <property type="entry name" value="Chromosomal replication initiator protein DnaA"/>
    <property type="match status" value="1"/>
</dbReference>
<dbReference type="FunFam" id="1.10.8.60:FF:000003">
    <property type="entry name" value="Chromosomal replication initiator protein DnaA"/>
    <property type="match status" value="1"/>
</dbReference>
<dbReference type="FunFam" id="3.30.300.180:FF:000001">
    <property type="entry name" value="Chromosomal replication initiator protein DnaA"/>
    <property type="match status" value="1"/>
</dbReference>
<dbReference type="FunFam" id="3.40.50.300:FF:000103">
    <property type="entry name" value="Chromosomal replication initiator protein DnaA"/>
    <property type="match status" value="1"/>
</dbReference>
<dbReference type="Gene3D" id="1.10.1750.10">
    <property type="match status" value="1"/>
</dbReference>
<dbReference type="Gene3D" id="1.10.8.60">
    <property type="match status" value="1"/>
</dbReference>
<dbReference type="Gene3D" id="3.30.300.180">
    <property type="match status" value="1"/>
</dbReference>
<dbReference type="Gene3D" id="3.40.50.300">
    <property type="entry name" value="P-loop containing nucleotide triphosphate hydrolases"/>
    <property type="match status" value="1"/>
</dbReference>
<dbReference type="HAMAP" id="MF_00377">
    <property type="entry name" value="DnaA_bact"/>
    <property type="match status" value="1"/>
</dbReference>
<dbReference type="InterPro" id="IPR003593">
    <property type="entry name" value="AAA+_ATPase"/>
</dbReference>
<dbReference type="InterPro" id="IPR001957">
    <property type="entry name" value="Chromosome_initiator_DnaA"/>
</dbReference>
<dbReference type="InterPro" id="IPR020591">
    <property type="entry name" value="Chromosome_initiator_DnaA-like"/>
</dbReference>
<dbReference type="InterPro" id="IPR018312">
    <property type="entry name" value="Chromosome_initiator_DnaA_CS"/>
</dbReference>
<dbReference type="InterPro" id="IPR013159">
    <property type="entry name" value="DnaA_C"/>
</dbReference>
<dbReference type="InterPro" id="IPR013317">
    <property type="entry name" value="DnaA_dom"/>
</dbReference>
<dbReference type="InterPro" id="IPR024633">
    <property type="entry name" value="DnaA_N_dom"/>
</dbReference>
<dbReference type="InterPro" id="IPR038454">
    <property type="entry name" value="DnaA_N_sf"/>
</dbReference>
<dbReference type="InterPro" id="IPR055199">
    <property type="entry name" value="Hda_lid"/>
</dbReference>
<dbReference type="InterPro" id="IPR027417">
    <property type="entry name" value="P-loop_NTPase"/>
</dbReference>
<dbReference type="InterPro" id="IPR010921">
    <property type="entry name" value="Trp_repressor/repl_initiator"/>
</dbReference>
<dbReference type="NCBIfam" id="TIGR00362">
    <property type="entry name" value="DnaA"/>
    <property type="match status" value="1"/>
</dbReference>
<dbReference type="PANTHER" id="PTHR30050">
    <property type="entry name" value="CHROMOSOMAL REPLICATION INITIATOR PROTEIN DNAA"/>
    <property type="match status" value="1"/>
</dbReference>
<dbReference type="PANTHER" id="PTHR30050:SF2">
    <property type="entry name" value="CHROMOSOMAL REPLICATION INITIATOR PROTEIN DNAA"/>
    <property type="match status" value="1"/>
</dbReference>
<dbReference type="Pfam" id="PF00308">
    <property type="entry name" value="Bac_DnaA"/>
    <property type="match status" value="1"/>
</dbReference>
<dbReference type="Pfam" id="PF08299">
    <property type="entry name" value="Bac_DnaA_C"/>
    <property type="match status" value="1"/>
</dbReference>
<dbReference type="Pfam" id="PF11638">
    <property type="entry name" value="DnaA_N"/>
    <property type="match status" value="1"/>
</dbReference>
<dbReference type="Pfam" id="PF22688">
    <property type="entry name" value="Hda_lid"/>
    <property type="match status" value="1"/>
</dbReference>
<dbReference type="PRINTS" id="PR00051">
    <property type="entry name" value="DNAA"/>
</dbReference>
<dbReference type="SMART" id="SM00382">
    <property type="entry name" value="AAA"/>
    <property type="match status" value="1"/>
</dbReference>
<dbReference type="SMART" id="SM00760">
    <property type="entry name" value="Bac_DnaA_C"/>
    <property type="match status" value="1"/>
</dbReference>
<dbReference type="SUPFAM" id="SSF52540">
    <property type="entry name" value="P-loop containing nucleoside triphosphate hydrolases"/>
    <property type="match status" value="1"/>
</dbReference>
<dbReference type="SUPFAM" id="SSF48295">
    <property type="entry name" value="TrpR-like"/>
    <property type="match status" value="1"/>
</dbReference>
<dbReference type="PROSITE" id="PS01008">
    <property type="entry name" value="DNAA"/>
    <property type="match status" value="1"/>
</dbReference>
<reference key="1">
    <citation type="submission" date="2007-10" db="EMBL/GenBank/DDBJ databases">
        <title>Complete sequence of Shewanella pealeana ATCC 700345.</title>
        <authorList>
            <consortium name="US DOE Joint Genome Institute"/>
            <person name="Copeland A."/>
            <person name="Lucas S."/>
            <person name="Lapidus A."/>
            <person name="Barry K."/>
            <person name="Glavina del Rio T."/>
            <person name="Dalin E."/>
            <person name="Tice H."/>
            <person name="Pitluck S."/>
            <person name="Chertkov O."/>
            <person name="Brettin T."/>
            <person name="Bruce D."/>
            <person name="Detter J.C."/>
            <person name="Han C."/>
            <person name="Schmutz J."/>
            <person name="Larimer F."/>
            <person name="Land M."/>
            <person name="Hauser L."/>
            <person name="Kyrpides N."/>
            <person name="Kim E."/>
            <person name="Zhao J.-S.Z."/>
            <person name="Manno D."/>
            <person name="Hawari J."/>
            <person name="Richardson P."/>
        </authorList>
    </citation>
    <scope>NUCLEOTIDE SEQUENCE [LARGE SCALE GENOMIC DNA]</scope>
    <source>
        <strain>ATCC 700345 / ANG-SQ1</strain>
    </source>
</reference>
<feature type="chain" id="PRO_1000079963" description="Chromosomal replication initiator protein DnaA">
    <location>
        <begin position="1"/>
        <end position="461"/>
    </location>
</feature>
<feature type="region of interest" description="Domain I, interacts with DnaA modulators" evidence="1">
    <location>
        <begin position="1"/>
        <end position="87"/>
    </location>
</feature>
<feature type="region of interest" description="Domain II" evidence="1">
    <location>
        <begin position="87"/>
        <end position="124"/>
    </location>
</feature>
<feature type="region of interest" description="Disordered" evidence="2">
    <location>
        <begin position="99"/>
        <end position="125"/>
    </location>
</feature>
<feature type="region of interest" description="Domain III, AAA+ region" evidence="1">
    <location>
        <begin position="125"/>
        <end position="341"/>
    </location>
</feature>
<feature type="region of interest" description="Domain IV, binds dsDNA" evidence="1">
    <location>
        <begin position="342"/>
        <end position="461"/>
    </location>
</feature>
<feature type="binding site" evidence="1">
    <location>
        <position position="169"/>
    </location>
    <ligand>
        <name>ATP</name>
        <dbReference type="ChEBI" id="CHEBI:30616"/>
    </ligand>
</feature>
<feature type="binding site" evidence="1">
    <location>
        <position position="171"/>
    </location>
    <ligand>
        <name>ATP</name>
        <dbReference type="ChEBI" id="CHEBI:30616"/>
    </ligand>
</feature>
<feature type="binding site" evidence="1">
    <location>
        <position position="172"/>
    </location>
    <ligand>
        <name>ATP</name>
        <dbReference type="ChEBI" id="CHEBI:30616"/>
    </ligand>
</feature>
<feature type="binding site" evidence="1">
    <location>
        <position position="173"/>
    </location>
    <ligand>
        <name>ATP</name>
        <dbReference type="ChEBI" id="CHEBI:30616"/>
    </ligand>
</feature>
<organism>
    <name type="scientific">Shewanella pealeana (strain ATCC 700345 / ANG-SQ1)</name>
    <dbReference type="NCBI Taxonomy" id="398579"/>
    <lineage>
        <taxon>Bacteria</taxon>
        <taxon>Pseudomonadati</taxon>
        <taxon>Pseudomonadota</taxon>
        <taxon>Gammaproteobacteria</taxon>
        <taxon>Alteromonadales</taxon>
        <taxon>Shewanellaceae</taxon>
        <taxon>Shewanella</taxon>
    </lineage>
</organism>
<protein>
    <recommendedName>
        <fullName evidence="1">Chromosomal replication initiator protein DnaA</fullName>
    </recommendedName>
</protein>
<gene>
    <name evidence="1" type="primary">dnaA</name>
    <name type="ordered locus">Spea_0001</name>
</gene>
<name>DNAA_SHEPA</name>
<sequence>MAVSLWQQCIARLQDELSAQQFSMWIRPLQAEMEGDTLVIYAPNRFVLDWVRDKYLNIINQFFTEQMGSDAPSLRFDIGSRPSAKPVVQATAAVRTSRPVTREVTKPSFNTPHAEPMANANHRSNINPTYQFDNFVEGKSNQLGKAAALQVAENPGGAYNPLFLYGGTGLGKTHLLHAVGNGIIKNNPNAKVVYMHSERFVQDMVKALQNNAIEEFKRYYRSVDALFIDDIQFFANKDRSQEEFFHTFNALLEGNHQIILTSDKYPKEIDGVEDRLKSRFGWGLTVAIEPPELETRVAILMRKAQESGINLPDEVAFFIAKRLRSNVRELEGALNRVIANANFTGRPITIDFVREALRDLLALQEKLVTIDNIQKTVAEYYKIKMADMLSKRRSRSVARPRQMAMALSKELTNQSLPEIGDAFGGRDHTTVLHACRKIAQLREESHDIKEDYANLIRTLSS</sequence>
<accession>A8GYE3</accession>
<proteinExistence type="inferred from homology"/>